<organism>
    <name type="scientific">Rhizobium meliloti (strain 1021)</name>
    <name type="common">Ensifer meliloti</name>
    <name type="synonym">Sinorhizobium meliloti</name>
    <dbReference type="NCBI Taxonomy" id="266834"/>
    <lineage>
        <taxon>Bacteria</taxon>
        <taxon>Pseudomonadati</taxon>
        <taxon>Pseudomonadota</taxon>
        <taxon>Alphaproteobacteria</taxon>
        <taxon>Hyphomicrobiales</taxon>
        <taxon>Rhizobiaceae</taxon>
        <taxon>Sinorhizobium/Ensifer group</taxon>
        <taxon>Sinorhizobium</taxon>
    </lineage>
</organism>
<feature type="chain" id="PRO_0000118675" description="NADH-quinone oxidoreductase subunit C 2">
    <location>
        <begin position="1"/>
        <end position="182"/>
    </location>
</feature>
<feature type="region of interest" description="Disordered" evidence="2">
    <location>
        <begin position="153"/>
        <end position="182"/>
    </location>
</feature>
<geneLocation type="plasmid">
    <name>pSymA</name>
    <name>megaplasmid 1</name>
</geneLocation>
<keyword id="KW-0997">Cell inner membrane</keyword>
<keyword id="KW-1003">Cell membrane</keyword>
<keyword id="KW-0472">Membrane</keyword>
<keyword id="KW-0520">NAD</keyword>
<keyword id="KW-0614">Plasmid</keyword>
<keyword id="KW-0874">Quinone</keyword>
<keyword id="KW-1185">Reference proteome</keyword>
<keyword id="KW-1278">Translocase</keyword>
<keyword id="KW-0813">Transport</keyword>
<keyword id="KW-0830">Ubiquinone</keyword>
<gene>
    <name evidence="1" type="primary">nuoC2</name>
    <name type="ordered locus">RA0832</name>
    <name type="ORF">SMa1531</name>
</gene>
<accession>P56896</accession>
<reference key="1">
    <citation type="submission" date="1999-07" db="EMBL/GenBank/DDBJ databases">
        <title>Rhizobium meliloti carries two sets of nuo genes.</title>
        <authorList>
            <person name="Putnoky P."/>
            <person name="Jady B."/>
            <person name="Chellapilla K.P."/>
            <person name="Barta F."/>
            <person name="Kiss E."/>
        </authorList>
    </citation>
    <scope>NUCLEOTIDE SEQUENCE [GENOMIC DNA]</scope>
    <source>
        <strain>41</strain>
    </source>
</reference>
<reference key="2">
    <citation type="journal article" date="2001" name="Proc. Natl. Acad. Sci. U.S.A.">
        <title>Nucleotide sequence and predicted functions of the entire Sinorhizobium meliloti pSymA megaplasmid.</title>
        <authorList>
            <person name="Barnett M.J."/>
            <person name="Fisher R.F."/>
            <person name="Jones T."/>
            <person name="Komp C."/>
            <person name="Abola A.P."/>
            <person name="Barloy-Hubler F."/>
            <person name="Bowser L."/>
            <person name="Capela D."/>
            <person name="Galibert F."/>
            <person name="Gouzy J."/>
            <person name="Gurjal M."/>
            <person name="Hong A."/>
            <person name="Huizar L."/>
            <person name="Hyman R.W."/>
            <person name="Kahn D."/>
            <person name="Kahn M.L."/>
            <person name="Kalman S."/>
            <person name="Keating D.H."/>
            <person name="Palm C."/>
            <person name="Peck M.C."/>
            <person name="Surzycki R."/>
            <person name="Wells D.H."/>
            <person name="Yeh K.-C."/>
            <person name="Davis R.W."/>
            <person name="Federspiel N.A."/>
            <person name="Long S.R."/>
        </authorList>
    </citation>
    <scope>NUCLEOTIDE SEQUENCE [LARGE SCALE GENOMIC DNA]</scope>
    <source>
        <strain>1021</strain>
    </source>
</reference>
<reference key="3">
    <citation type="journal article" date="2001" name="Science">
        <title>The composite genome of the legume symbiont Sinorhizobium meliloti.</title>
        <authorList>
            <person name="Galibert F."/>
            <person name="Finan T.M."/>
            <person name="Long S.R."/>
            <person name="Puehler A."/>
            <person name="Abola P."/>
            <person name="Ampe F."/>
            <person name="Barloy-Hubler F."/>
            <person name="Barnett M.J."/>
            <person name="Becker A."/>
            <person name="Boistard P."/>
            <person name="Bothe G."/>
            <person name="Boutry M."/>
            <person name="Bowser L."/>
            <person name="Buhrmester J."/>
            <person name="Cadieu E."/>
            <person name="Capela D."/>
            <person name="Chain P."/>
            <person name="Cowie A."/>
            <person name="Davis R.W."/>
            <person name="Dreano S."/>
            <person name="Federspiel N.A."/>
            <person name="Fisher R.F."/>
            <person name="Gloux S."/>
            <person name="Godrie T."/>
            <person name="Goffeau A."/>
            <person name="Golding B."/>
            <person name="Gouzy J."/>
            <person name="Gurjal M."/>
            <person name="Hernandez-Lucas I."/>
            <person name="Hong A."/>
            <person name="Huizar L."/>
            <person name="Hyman R.W."/>
            <person name="Jones T."/>
            <person name="Kahn D."/>
            <person name="Kahn M.L."/>
            <person name="Kalman S."/>
            <person name="Keating D.H."/>
            <person name="Kiss E."/>
            <person name="Komp C."/>
            <person name="Lelaure V."/>
            <person name="Masuy D."/>
            <person name="Palm C."/>
            <person name="Peck M.C."/>
            <person name="Pohl T.M."/>
            <person name="Portetelle D."/>
            <person name="Purnelle B."/>
            <person name="Ramsperger U."/>
            <person name="Surzycki R."/>
            <person name="Thebault P."/>
            <person name="Vandenbol M."/>
            <person name="Vorhoelter F.J."/>
            <person name="Weidner S."/>
            <person name="Wells D.H."/>
            <person name="Wong K."/>
            <person name="Yeh K.-C."/>
            <person name="Batut J."/>
        </authorList>
    </citation>
    <scope>NUCLEOTIDE SEQUENCE [LARGE SCALE GENOMIC DNA]</scope>
    <source>
        <strain>1021</strain>
    </source>
</reference>
<evidence type="ECO:0000255" key="1">
    <source>
        <dbReference type="HAMAP-Rule" id="MF_01357"/>
    </source>
</evidence>
<evidence type="ECO:0000256" key="2">
    <source>
        <dbReference type="SAM" id="MobiDB-lite"/>
    </source>
</evidence>
<name>NUOC2_RHIME</name>
<protein>
    <recommendedName>
        <fullName evidence="1">NADH-quinone oxidoreductase subunit C 2</fullName>
        <ecNumber evidence="1">7.1.1.-</ecNumber>
    </recommendedName>
    <alternativeName>
        <fullName evidence="1">NADH dehydrogenase I subunit C 2</fullName>
    </alternativeName>
    <alternativeName>
        <fullName evidence="1">NDH-1 subunit C 2</fullName>
    </alternativeName>
</protein>
<dbReference type="EC" id="7.1.1.-" evidence="1"/>
<dbReference type="EMBL" id="AJ245399">
    <property type="protein sequence ID" value="CAB51631.1"/>
    <property type="molecule type" value="Genomic_DNA"/>
</dbReference>
<dbReference type="EMBL" id="AE006469">
    <property type="protein sequence ID" value="AAK65490.1"/>
    <property type="molecule type" value="Genomic_DNA"/>
</dbReference>
<dbReference type="PIR" id="H95365">
    <property type="entry name" value="H95365"/>
</dbReference>
<dbReference type="RefSeq" id="NP_436078.1">
    <property type="nucleotide sequence ID" value="NC_003037.1"/>
</dbReference>
<dbReference type="RefSeq" id="WP_010967800.1">
    <property type="nucleotide sequence ID" value="NC_003037.1"/>
</dbReference>
<dbReference type="SMR" id="P56896"/>
<dbReference type="EnsemblBacteria" id="AAK65490">
    <property type="protein sequence ID" value="AAK65490"/>
    <property type="gene ID" value="SMa1531"/>
</dbReference>
<dbReference type="KEGG" id="sme:SMa1531"/>
<dbReference type="PATRIC" id="fig|266834.11.peg.863"/>
<dbReference type="HOGENOM" id="CLU_042628_6_2_5"/>
<dbReference type="OrthoDB" id="9803286at2"/>
<dbReference type="PRO" id="PR:P56896"/>
<dbReference type="Proteomes" id="UP000001976">
    <property type="component" value="Plasmid pSymA"/>
</dbReference>
<dbReference type="GO" id="GO:0005886">
    <property type="term" value="C:plasma membrane"/>
    <property type="evidence" value="ECO:0007669"/>
    <property type="project" value="UniProtKB-SubCell"/>
</dbReference>
<dbReference type="GO" id="GO:0008137">
    <property type="term" value="F:NADH dehydrogenase (ubiquinone) activity"/>
    <property type="evidence" value="ECO:0007669"/>
    <property type="project" value="InterPro"/>
</dbReference>
<dbReference type="GO" id="GO:0050136">
    <property type="term" value="F:NADH:ubiquinone reductase (non-electrogenic) activity"/>
    <property type="evidence" value="ECO:0007669"/>
    <property type="project" value="UniProtKB-UniRule"/>
</dbReference>
<dbReference type="GO" id="GO:0048038">
    <property type="term" value="F:quinone binding"/>
    <property type="evidence" value="ECO:0007669"/>
    <property type="project" value="UniProtKB-KW"/>
</dbReference>
<dbReference type="Gene3D" id="3.30.460.80">
    <property type="entry name" value="NADH:ubiquinone oxidoreductase, 30kDa subunit"/>
    <property type="match status" value="1"/>
</dbReference>
<dbReference type="HAMAP" id="MF_01357">
    <property type="entry name" value="NDH1_NuoC"/>
    <property type="match status" value="1"/>
</dbReference>
<dbReference type="InterPro" id="IPR010218">
    <property type="entry name" value="NADH_DH_suC"/>
</dbReference>
<dbReference type="InterPro" id="IPR037232">
    <property type="entry name" value="NADH_quin_OxRdtase_su_C/D-like"/>
</dbReference>
<dbReference type="InterPro" id="IPR001268">
    <property type="entry name" value="NADH_UbQ_OxRdtase_30kDa_su"/>
</dbReference>
<dbReference type="InterPro" id="IPR020396">
    <property type="entry name" value="NADH_UbQ_OxRdtase_CS"/>
</dbReference>
<dbReference type="NCBIfam" id="TIGR01961">
    <property type="entry name" value="NuoC_fam"/>
    <property type="match status" value="1"/>
</dbReference>
<dbReference type="PANTHER" id="PTHR10884:SF14">
    <property type="entry name" value="NADH DEHYDROGENASE [UBIQUINONE] IRON-SULFUR PROTEIN 3, MITOCHONDRIAL"/>
    <property type="match status" value="1"/>
</dbReference>
<dbReference type="PANTHER" id="PTHR10884">
    <property type="entry name" value="NADH DEHYDROGENASE UBIQUINONE IRON-SULFUR PROTEIN 3"/>
    <property type="match status" value="1"/>
</dbReference>
<dbReference type="Pfam" id="PF00329">
    <property type="entry name" value="Complex1_30kDa"/>
    <property type="match status" value="1"/>
</dbReference>
<dbReference type="SUPFAM" id="SSF143243">
    <property type="entry name" value="Nqo5-like"/>
    <property type="match status" value="1"/>
</dbReference>
<dbReference type="PROSITE" id="PS00542">
    <property type="entry name" value="COMPLEX1_30K"/>
    <property type="match status" value="1"/>
</dbReference>
<comment type="function">
    <text evidence="1">NDH-1 shuttles electrons from NADH, via FMN and iron-sulfur (Fe-S) centers, to quinones in the respiratory chain. The immediate electron acceptor for the enzyme in this species is believed to be ubiquinone. Couples the redox reaction to proton translocation (for every two electrons transferred, four hydrogen ions are translocated across the cytoplasmic membrane), and thus conserves the redox energy in a proton gradient.</text>
</comment>
<comment type="catalytic activity">
    <reaction evidence="1">
        <text>a quinone + NADH + 5 H(+)(in) = a quinol + NAD(+) + 4 H(+)(out)</text>
        <dbReference type="Rhea" id="RHEA:57888"/>
        <dbReference type="ChEBI" id="CHEBI:15378"/>
        <dbReference type="ChEBI" id="CHEBI:24646"/>
        <dbReference type="ChEBI" id="CHEBI:57540"/>
        <dbReference type="ChEBI" id="CHEBI:57945"/>
        <dbReference type="ChEBI" id="CHEBI:132124"/>
    </reaction>
</comment>
<comment type="subunit">
    <text evidence="1">NDH-1 is composed of 14 different subunits. Subunits NuoB, C, D, E, F, and G constitute the peripheral sector of the complex.</text>
</comment>
<comment type="subcellular location">
    <subcellularLocation>
        <location evidence="1">Cell inner membrane</location>
        <topology evidence="1">Peripheral membrane protein</topology>
        <orientation evidence="1">Cytoplasmic side</orientation>
    </subcellularLocation>
</comment>
<comment type="similarity">
    <text evidence="1">Belongs to the complex I 30 kDa subunit family.</text>
</comment>
<sequence length="182" mass="20893">MTGERPVHLTAIIGSFGGAVENLGAAHGIYAFAVPPEQIVEFCRFLKEHPALEFDFLSDICGVDHYPETPRFETVYHLYSLKNKWRVRIKCRLGEPPHVPTVTGVWRTANWHEREAWDMYGIRFEGHPDLRRIYMWEGFEGFPQRKDFPLRGYKDKLNPFGAEGPPPTQPDLATNDIPQGGR</sequence>
<proteinExistence type="inferred from homology"/>